<comment type="function">
    <text evidence="1">Mitochondrial membrane ATP synthase (F(1)F(0) ATP synthase or Complex V) produces ATP from ADP in the presence of a proton gradient across the membrane which is generated by electron transport complexes of the respiratory chain. F-type ATPases consist of two structural domains, F(1) - containing the extramembraneous catalytic core, and F(0) - containing the membrane proton channel, linked together by a central stalk and a peripheral stalk. During catalysis, ATP synthesis in the catalytic domain of F(1) is coupled via a rotary mechanism of the central stalk subunits to proton translocation. Subunits alpha and beta form the catalytic core in F(1). Rotation of the central stalk against the surrounding alpha(3)beta(3) subunits leads to hydrolysis of ATP in three separate catalytic sites on the beta subunits. Subunit alpha does not bear the catalytic high-affinity ATP-binding sites (By similarity).</text>
</comment>
<comment type="subunit">
    <text>F-type ATPases have 2 components, CF(1) - the catalytic core - and CF(0) - the membrane proton channel. CF(1) has five subunits: alpha(3), beta(3), gamma(1), delta(1), epsilon(1). CF(0) has three main subunits: a, b and c.</text>
</comment>
<comment type="subcellular location">
    <subcellularLocation>
        <location>Mitochondrion</location>
    </subcellularLocation>
    <subcellularLocation>
        <location>Mitochondrion inner membrane</location>
    </subcellularLocation>
    <text>Peripheral membrane protein.</text>
</comment>
<comment type="similarity">
    <text evidence="2">Belongs to the ATPase alpha/beta chains family.</text>
</comment>
<organism>
    <name type="scientific">Schizosaccharomyces pombe (strain 972 / ATCC 24843)</name>
    <name type="common">Fission yeast</name>
    <dbReference type="NCBI Taxonomy" id="284812"/>
    <lineage>
        <taxon>Eukaryota</taxon>
        <taxon>Fungi</taxon>
        <taxon>Dikarya</taxon>
        <taxon>Ascomycota</taxon>
        <taxon>Taphrinomycotina</taxon>
        <taxon>Schizosaccharomycetes</taxon>
        <taxon>Schizosaccharomycetales</taxon>
        <taxon>Schizosaccharomycetaceae</taxon>
        <taxon>Schizosaccharomyces</taxon>
    </lineage>
</organism>
<proteinExistence type="inferred from homology"/>
<reference key="1">
    <citation type="journal article" date="1991" name="J. Biol. Chem.">
        <title>Alpha subunit of mitochondrial F1-ATPase from the fission yeast. Deduced sequence of the wild type and identification of a mutation that alters apparent negative cooperativity.</title>
        <authorList>
            <person name="Falson P."/>
            <person name="Maffey L."/>
            <person name="Conrath K."/>
            <person name="Boutry M."/>
        </authorList>
    </citation>
    <scope>NUCLEOTIDE SEQUENCE [GENOMIC DNA]</scope>
</reference>
<reference key="2">
    <citation type="journal article" date="2002" name="Nature">
        <title>The genome sequence of Schizosaccharomyces pombe.</title>
        <authorList>
            <person name="Wood V."/>
            <person name="Gwilliam R."/>
            <person name="Rajandream M.A."/>
            <person name="Lyne M.H."/>
            <person name="Lyne R."/>
            <person name="Stewart A."/>
            <person name="Sgouros J.G."/>
            <person name="Peat N."/>
            <person name="Hayles J."/>
            <person name="Baker S.G."/>
            <person name="Basham D."/>
            <person name="Bowman S."/>
            <person name="Brooks K."/>
            <person name="Brown D."/>
            <person name="Brown S."/>
            <person name="Chillingworth T."/>
            <person name="Churcher C.M."/>
            <person name="Collins M."/>
            <person name="Connor R."/>
            <person name="Cronin A."/>
            <person name="Davis P."/>
            <person name="Feltwell T."/>
            <person name="Fraser A."/>
            <person name="Gentles S."/>
            <person name="Goble A."/>
            <person name="Hamlin N."/>
            <person name="Harris D.E."/>
            <person name="Hidalgo J."/>
            <person name="Hodgson G."/>
            <person name="Holroyd S."/>
            <person name="Hornsby T."/>
            <person name="Howarth S."/>
            <person name="Huckle E.J."/>
            <person name="Hunt S."/>
            <person name="Jagels K."/>
            <person name="James K.D."/>
            <person name="Jones L."/>
            <person name="Jones M."/>
            <person name="Leather S."/>
            <person name="McDonald S."/>
            <person name="McLean J."/>
            <person name="Mooney P."/>
            <person name="Moule S."/>
            <person name="Mungall K.L."/>
            <person name="Murphy L.D."/>
            <person name="Niblett D."/>
            <person name="Odell C."/>
            <person name="Oliver K."/>
            <person name="O'Neil S."/>
            <person name="Pearson D."/>
            <person name="Quail M.A."/>
            <person name="Rabbinowitsch E."/>
            <person name="Rutherford K.M."/>
            <person name="Rutter S."/>
            <person name="Saunders D."/>
            <person name="Seeger K."/>
            <person name="Sharp S."/>
            <person name="Skelton J."/>
            <person name="Simmonds M.N."/>
            <person name="Squares R."/>
            <person name="Squares S."/>
            <person name="Stevens K."/>
            <person name="Taylor K."/>
            <person name="Taylor R.G."/>
            <person name="Tivey A."/>
            <person name="Walsh S.V."/>
            <person name="Warren T."/>
            <person name="Whitehead S."/>
            <person name="Woodward J.R."/>
            <person name="Volckaert G."/>
            <person name="Aert R."/>
            <person name="Robben J."/>
            <person name="Grymonprez B."/>
            <person name="Weltjens I."/>
            <person name="Vanstreels E."/>
            <person name="Rieger M."/>
            <person name="Schaefer M."/>
            <person name="Mueller-Auer S."/>
            <person name="Gabel C."/>
            <person name="Fuchs M."/>
            <person name="Duesterhoeft A."/>
            <person name="Fritzc C."/>
            <person name="Holzer E."/>
            <person name="Moestl D."/>
            <person name="Hilbert H."/>
            <person name="Borzym K."/>
            <person name="Langer I."/>
            <person name="Beck A."/>
            <person name="Lehrach H."/>
            <person name="Reinhardt R."/>
            <person name="Pohl T.M."/>
            <person name="Eger P."/>
            <person name="Zimmermann W."/>
            <person name="Wedler H."/>
            <person name="Wambutt R."/>
            <person name="Purnelle B."/>
            <person name="Goffeau A."/>
            <person name="Cadieu E."/>
            <person name="Dreano S."/>
            <person name="Gloux S."/>
            <person name="Lelaure V."/>
            <person name="Mottier S."/>
            <person name="Galibert F."/>
            <person name="Aves S.J."/>
            <person name="Xiang Z."/>
            <person name="Hunt C."/>
            <person name="Moore K."/>
            <person name="Hurst S.M."/>
            <person name="Lucas M."/>
            <person name="Rochet M."/>
            <person name="Gaillardin C."/>
            <person name="Tallada V.A."/>
            <person name="Garzon A."/>
            <person name="Thode G."/>
            <person name="Daga R.R."/>
            <person name="Cruzado L."/>
            <person name="Jimenez J."/>
            <person name="Sanchez M."/>
            <person name="del Rey F."/>
            <person name="Benito J."/>
            <person name="Dominguez A."/>
            <person name="Revuelta J.L."/>
            <person name="Moreno S."/>
            <person name="Armstrong J."/>
            <person name="Forsburg S.L."/>
            <person name="Cerutti L."/>
            <person name="Lowe T."/>
            <person name="McCombie W.R."/>
            <person name="Paulsen I."/>
            <person name="Potashkin J."/>
            <person name="Shpakovski G.V."/>
            <person name="Ussery D."/>
            <person name="Barrell B.G."/>
            <person name="Nurse P."/>
        </authorList>
    </citation>
    <scope>NUCLEOTIDE SEQUENCE [LARGE SCALE GENOMIC DNA]</scope>
    <source>
        <strain>972 / ATCC 24843</strain>
    </source>
</reference>
<protein>
    <recommendedName>
        <fullName>ATP synthase subunit alpha, mitochondrial</fullName>
    </recommendedName>
</protein>
<accession>P24487</accession>
<dbReference type="EMBL" id="M57955">
    <property type="protein sequence ID" value="AAA35286.1"/>
    <property type="molecule type" value="Genomic_DNA"/>
</dbReference>
<dbReference type="EMBL" id="CU329670">
    <property type="protein sequence ID" value="CAB11207.1"/>
    <property type="molecule type" value="Genomic_DNA"/>
</dbReference>
<dbReference type="PIR" id="A39036">
    <property type="entry name" value="A39036"/>
</dbReference>
<dbReference type="RefSeq" id="NP_594919.1">
    <property type="nucleotide sequence ID" value="NM_001020351.2"/>
</dbReference>
<dbReference type="SMR" id="P24487"/>
<dbReference type="BioGRID" id="278026">
    <property type="interactions" value="8"/>
</dbReference>
<dbReference type="ComplexPortal" id="CPX-25764">
    <property type="entry name" value="Mitochondrial proton translocating ATP synthase complex"/>
</dbReference>
<dbReference type="FunCoup" id="P24487">
    <property type="interactions" value="235"/>
</dbReference>
<dbReference type="STRING" id="284812.P24487"/>
<dbReference type="iPTMnet" id="P24487"/>
<dbReference type="PaxDb" id="4896-SPAC14C4.14.1"/>
<dbReference type="EnsemblFungi" id="SPAC14C4.14.1">
    <property type="protein sequence ID" value="SPAC14C4.14.1:pep"/>
    <property type="gene ID" value="SPAC14C4.14"/>
</dbReference>
<dbReference type="GeneID" id="2541526"/>
<dbReference type="KEGG" id="spo:2541526"/>
<dbReference type="PomBase" id="SPAC14C4.14">
    <property type="gene designation" value="atp1"/>
</dbReference>
<dbReference type="VEuPathDB" id="FungiDB:SPAC14C4.14"/>
<dbReference type="eggNOG" id="KOG1353">
    <property type="taxonomic scope" value="Eukaryota"/>
</dbReference>
<dbReference type="HOGENOM" id="CLU_010091_2_1_1"/>
<dbReference type="InParanoid" id="P24487"/>
<dbReference type="OMA" id="YCGVKGY"/>
<dbReference type="PhylomeDB" id="P24487"/>
<dbReference type="Reactome" id="R-SPO-9837999">
    <property type="pathway name" value="Mitochondrial protein degradation"/>
</dbReference>
<dbReference type="PRO" id="PR:P24487"/>
<dbReference type="Proteomes" id="UP000002485">
    <property type="component" value="Chromosome I"/>
</dbReference>
<dbReference type="GO" id="GO:0099617">
    <property type="term" value="C:matrix side of mitochondrial inner membrane"/>
    <property type="evidence" value="ECO:0000303"/>
    <property type="project" value="PomBase"/>
</dbReference>
<dbReference type="GO" id="GO:0045259">
    <property type="term" value="C:proton-transporting ATP synthase complex"/>
    <property type="evidence" value="ECO:0007669"/>
    <property type="project" value="UniProtKB-KW"/>
</dbReference>
<dbReference type="GO" id="GO:0043531">
    <property type="term" value="F:ADP binding"/>
    <property type="evidence" value="ECO:0000318"/>
    <property type="project" value="GO_Central"/>
</dbReference>
<dbReference type="GO" id="GO:0005524">
    <property type="term" value="F:ATP binding"/>
    <property type="evidence" value="ECO:0000318"/>
    <property type="project" value="GO_Central"/>
</dbReference>
<dbReference type="GO" id="GO:0046933">
    <property type="term" value="F:proton-transporting ATP synthase activity, rotational mechanism"/>
    <property type="evidence" value="ECO:0000269"/>
    <property type="project" value="PomBase"/>
</dbReference>
<dbReference type="GO" id="GO:0015986">
    <property type="term" value="P:proton motive force-driven ATP synthesis"/>
    <property type="evidence" value="ECO:0000318"/>
    <property type="project" value="GO_Central"/>
</dbReference>
<dbReference type="GO" id="GO:0042776">
    <property type="term" value="P:proton motive force-driven mitochondrial ATP synthesis"/>
    <property type="evidence" value="ECO:0000304"/>
    <property type="project" value="PomBase"/>
</dbReference>
<dbReference type="CDD" id="cd18113">
    <property type="entry name" value="ATP-synt_F1_alpha_C"/>
    <property type="match status" value="1"/>
</dbReference>
<dbReference type="CDD" id="cd18116">
    <property type="entry name" value="ATP-synt_F1_alpha_N"/>
    <property type="match status" value="1"/>
</dbReference>
<dbReference type="CDD" id="cd01132">
    <property type="entry name" value="F1-ATPase_alpha_CD"/>
    <property type="match status" value="1"/>
</dbReference>
<dbReference type="FunFam" id="1.20.150.20:FF:000001">
    <property type="entry name" value="ATP synthase subunit alpha"/>
    <property type="match status" value="1"/>
</dbReference>
<dbReference type="FunFam" id="2.40.30.20:FF:000001">
    <property type="entry name" value="ATP synthase subunit alpha"/>
    <property type="match status" value="1"/>
</dbReference>
<dbReference type="FunFam" id="3.40.50.300:FF:004039">
    <property type="entry name" value="ATP synthase subunit alpha, mitochondrial"/>
    <property type="match status" value="1"/>
</dbReference>
<dbReference type="Gene3D" id="2.40.30.20">
    <property type="match status" value="1"/>
</dbReference>
<dbReference type="Gene3D" id="1.20.150.20">
    <property type="entry name" value="ATP synthase alpha/beta chain, C-terminal domain"/>
    <property type="match status" value="1"/>
</dbReference>
<dbReference type="Gene3D" id="3.40.50.300">
    <property type="entry name" value="P-loop containing nucleotide triphosphate hydrolases"/>
    <property type="match status" value="1"/>
</dbReference>
<dbReference type="HAMAP" id="MF_01346">
    <property type="entry name" value="ATP_synth_alpha_bact"/>
    <property type="match status" value="1"/>
</dbReference>
<dbReference type="InterPro" id="IPR023366">
    <property type="entry name" value="ATP_synth_asu-like_sf"/>
</dbReference>
<dbReference type="InterPro" id="IPR000793">
    <property type="entry name" value="ATP_synth_asu_C"/>
</dbReference>
<dbReference type="InterPro" id="IPR038376">
    <property type="entry name" value="ATP_synth_asu_C_sf"/>
</dbReference>
<dbReference type="InterPro" id="IPR033732">
    <property type="entry name" value="ATP_synth_F1_a_nt-bd_dom"/>
</dbReference>
<dbReference type="InterPro" id="IPR005294">
    <property type="entry name" value="ATP_synth_F1_asu"/>
</dbReference>
<dbReference type="InterPro" id="IPR020003">
    <property type="entry name" value="ATPase_a/bsu_AS"/>
</dbReference>
<dbReference type="InterPro" id="IPR004100">
    <property type="entry name" value="ATPase_F1/V1/A1_a/bsu_N"/>
</dbReference>
<dbReference type="InterPro" id="IPR036121">
    <property type="entry name" value="ATPase_F1/V1/A1_a/bsu_N_sf"/>
</dbReference>
<dbReference type="InterPro" id="IPR000194">
    <property type="entry name" value="ATPase_F1/V1/A1_a/bsu_nucl-bd"/>
</dbReference>
<dbReference type="InterPro" id="IPR027417">
    <property type="entry name" value="P-loop_NTPase"/>
</dbReference>
<dbReference type="NCBIfam" id="TIGR00962">
    <property type="entry name" value="atpA"/>
    <property type="match status" value="1"/>
</dbReference>
<dbReference type="NCBIfam" id="NF009884">
    <property type="entry name" value="PRK13343.1"/>
    <property type="match status" value="1"/>
</dbReference>
<dbReference type="PANTHER" id="PTHR48082">
    <property type="entry name" value="ATP SYNTHASE SUBUNIT ALPHA, MITOCHONDRIAL"/>
    <property type="match status" value="1"/>
</dbReference>
<dbReference type="PANTHER" id="PTHR48082:SF2">
    <property type="entry name" value="ATP SYNTHASE SUBUNIT ALPHA, MITOCHONDRIAL"/>
    <property type="match status" value="1"/>
</dbReference>
<dbReference type="Pfam" id="PF00006">
    <property type="entry name" value="ATP-synt_ab"/>
    <property type="match status" value="1"/>
</dbReference>
<dbReference type="Pfam" id="PF00306">
    <property type="entry name" value="ATP-synt_ab_C"/>
    <property type="match status" value="1"/>
</dbReference>
<dbReference type="Pfam" id="PF02874">
    <property type="entry name" value="ATP-synt_ab_N"/>
    <property type="match status" value="1"/>
</dbReference>
<dbReference type="PIRSF" id="PIRSF039088">
    <property type="entry name" value="F_ATPase_subunit_alpha"/>
    <property type="match status" value="1"/>
</dbReference>
<dbReference type="SUPFAM" id="SSF47917">
    <property type="entry name" value="C-terminal domain of alpha and beta subunits of F1 ATP synthase"/>
    <property type="match status" value="1"/>
</dbReference>
<dbReference type="SUPFAM" id="SSF50615">
    <property type="entry name" value="N-terminal domain of alpha and beta subunits of F1 ATP synthase"/>
    <property type="match status" value="1"/>
</dbReference>
<dbReference type="SUPFAM" id="SSF52540">
    <property type="entry name" value="P-loop containing nucleoside triphosphate hydrolases"/>
    <property type="match status" value="1"/>
</dbReference>
<dbReference type="PROSITE" id="PS00152">
    <property type="entry name" value="ATPASE_ALPHA_BETA"/>
    <property type="match status" value="1"/>
</dbReference>
<feature type="transit peptide" description="Mitochondrion">
    <location>
        <begin position="1"/>
        <end position="27"/>
    </location>
</feature>
<feature type="chain" id="PRO_0000002432" description="ATP synthase subunit alpha, mitochondrial">
    <location>
        <begin position="28"/>
        <end position="536"/>
    </location>
</feature>
<feature type="binding site" evidence="1">
    <location>
        <begin position="197"/>
        <end position="204"/>
    </location>
    <ligand>
        <name>ATP</name>
        <dbReference type="ChEBI" id="CHEBI:30616"/>
    </ligand>
</feature>
<feature type="site" description="Required for activity" evidence="1">
    <location>
        <position position="398"/>
    </location>
</feature>
<sequence length="536" mass="58588">MLRQAGTRLLKVPVCGLRPSITLKRGYAEKAAPTEVPSILEERIRGAYNQAQMMESGRVLSIGDGIARISGLSNVQAEELVEFSSGIKGMALNLEADTVGCVLFGNDRLVREGEVVKRTRHIVDVPVGEALLGRVVDALGNPIDGKGPIKTTERRRVQLKAPGILPRTSVCEPMQTGLKAIDSMVPIGRGQRELIIGDRQTGKTAIALDTILNHKRWNNSSDESKKLYCVYVAVGQKRSTVAQLVQKLEENDSLKYSIIVAATASESAPLQYLAPFSGCAMGEWFRDNGKHGLVVYDDLSKQAVAYRQMSLLLRRPPGREAYPGDVFYLHSRLLERAAKMSPKHGGGSLTALPVIETQGGDVSAYIPTNVISITDGQIFLESELFFKGIRPAINVGLSVSRVGSAAQVKAMKQVAGQIKLFLAQYREVASFAQFGSDLDAGTRATLDRGLRLTELLKQPQYSPLAVEEQVPLIYCGVKGYLDKIPVDRVVEFEHKFIPYLRSSGAEIMEAIRKEGVLSKTTEDSLKAVIKEFLSSF</sequence>
<gene>
    <name type="primary">atp1</name>
    <name type="ORF">SPAC14C4.14</name>
</gene>
<keyword id="KW-0066">ATP synthesis</keyword>
<keyword id="KW-0067">ATP-binding</keyword>
<keyword id="KW-0139">CF(1)</keyword>
<keyword id="KW-0375">Hydrogen ion transport</keyword>
<keyword id="KW-0406">Ion transport</keyword>
<keyword id="KW-0472">Membrane</keyword>
<keyword id="KW-0496">Mitochondrion</keyword>
<keyword id="KW-0999">Mitochondrion inner membrane</keyword>
<keyword id="KW-0547">Nucleotide-binding</keyword>
<keyword id="KW-1185">Reference proteome</keyword>
<keyword id="KW-0809">Transit peptide</keyword>
<keyword id="KW-0813">Transport</keyword>
<evidence type="ECO:0000250" key="1"/>
<evidence type="ECO:0000305" key="2"/>
<name>ATPA_SCHPO</name>